<comment type="function">
    <text evidence="2">Inhibits transglutaminase-activating metalloprotease.</text>
</comment>
<comment type="subunit">
    <text evidence="1">Homodimer.</text>
</comment>
<comment type="subcellular location">
    <subcellularLocation>
        <location evidence="2">Secreted</location>
    </subcellularLocation>
</comment>
<comment type="similarity">
    <text evidence="3">Belongs to the protease inhibitor I16 (SSI) family.</text>
</comment>
<evidence type="ECO:0000250" key="1"/>
<evidence type="ECO:0000269" key="2">
    <source>
    </source>
</evidence>
<evidence type="ECO:0000305" key="3"/>
<evidence type="ECO:0007829" key="4">
    <source>
        <dbReference type="PDB" id="6I0I"/>
    </source>
</evidence>
<name>SSIT_STRMB</name>
<dbReference type="EMBL" id="HF968451">
    <property type="protein sequence ID" value="CCW72533.1"/>
    <property type="molecule type" value="Genomic_DNA"/>
</dbReference>
<dbReference type="RefSeq" id="WP_004949231.1">
    <property type="nucleotide sequence ID" value="NZ_JBFADJ010000020.1"/>
</dbReference>
<dbReference type="PDB" id="6I0I">
    <property type="method" value="X-ray"/>
    <property type="resolution" value="1.45 A"/>
    <property type="chains" value="A/B=41-148"/>
</dbReference>
<dbReference type="PDBsum" id="6I0I"/>
<dbReference type="SMR" id="P83544"/>
<dbReference type="GO" id="GO:0005576">
    <property type="term" value="C:extracellular region"/>
    <property type="evidence" value="ECO:0007669"/>
    <property type="project" value="UniProtKB-SubCell"/>
</dbReference>
<dbReference type="GO" id="GO:0004867">
    <property type="term" value="F:serine-type endopeptidase inhibitor activity"/>
    <property type="evidence" value="ECO:0007669"/>
    <property type="project" value="UniProtKB-UniRule"/>
</dbReference>
<dbReference type="Gene3D" id="3.30.350.10">
    <property type="entry name" value="Subtilisin inhibitor-like"/>
    <property type="match status" value="1"/>
</dbReference>
<dbReference type="HAMAP" id="MF_00778">
    <property type="entry name" value="SSI"/>
    <property type="match status" value="1"/>
</dbReference>
<dbReference type="InterPro" id="IPR000691">
    <property type="entry name" value="Prot_inh_I16_SSI"/>
</dbReference>
<dbReference type="InterPro" id="IPR020054">
    <property type="entry name" value="Prot_inh_SSI_I16_CS"/>
</dbReference>
<dbReference type="InterPro" id="IPR023549">
    <property type="entry name" value="Subtilisin_inhibitor"/>
</dbReference>
<dbReference type="InterPro" id="IPR036819">
    <property type="entry name" value="Subtilisin_inhibitor-like_sf"/>
</dbReference>
<dbReference type="Pfam" id="PF00720">
    <property type="entry name" value="SSI"/>
    <property type="match status" value="1"/>
</dbReference>
<dbReference type="PRINTS" id="PR00294">
    <property type="entry name" value="SSBTLNINHBTR"/>
</dbReference>
<dbReference type="SUPFAM" id="SSF55399">
    <property type="entry name" value="Subtilisin inhibitor"/>
    <property type="match status" value="1"/>
</dbReference>
<dbReference type="PROSITE" id="PS00999">
    <property type="entry name" value="SSI"/>
    <property type="match status" value="1"/>
</dbReference>
<sequence length="148" mass="15170">MRYITGGIALGSALILGSLVGAGATASATPAPAPAAQQSLYAPSALVLTVGQGDKAASAGVQRAVTLNCMPKPSGTHPDARGACDQLRAASGNFAEITKIKSGTACTKEWNPFVVTAEGVWEGQRVKYEHTFANPCEMKAGKGTVFEF</sequence>
<reference key="1">
    <citation type="submission" date="2013-04" db="EMBL/GenBank/DDBJ databases">
        <title>Gene structure of the subtilisin and transglutaminase-activating metalloprotease inhibitor from Streptomyces mobaraensis.</title>
        <authorList>
            <person name="Zindel S."/>
            <person name="Froels S."/>
            <person name="Kletzin A."/>
            <person name="Pfeifer F."/>
            <person name="Fuchsbauer H.L."/>
        </authorList>
    </citation>
    <scope>NUCLEOTIDE SEQUENCE [GENOMIC DNA]</scope>
    <source>
        <strain>ATCC 29032 / CBS 199.75 / DSM 40847 / NBRC 13819 / NCIMB 11159 / NRRL B-3729 / VKM Ac-928</strain>
    </source>
</reference>
<reference key="2">
    <citation type="journal article" date="2003" name="Eur. J. Biochem.">
        <title>Transglutaminase from Streptomyces mobaraensis is activated by an endogenous metalloprotease.</title>
        <authorList>
            <person name="Zotzel J."/>
            <person name="Keller P."/>
            <person name="Fuchsbauer H.-L."/>
        </authorList>
    </citation>
    <scope>PROTEIN SEQUENCE OF 39-54</scope>
    <scope>FUNCTION</scope>
    <scope>SUBCELLULAR LOCATION</scope>
    <source>
        <strain>ATCC 27441 / CBS 777.72 / DSM 40587 / JCM 4778 / NBRC 13476 / VKM Ac-879</strain>
    </source>
</reference>
<organism>
    <name type="scientific">Streptomyces mobaraensis</name>
    <name type="common">Streptoverticillium mobaraense</name>
    <dbReference type="NCBI Taxonomy" id="35621"/>
    <lineage>
        <taxon>Bacteria</taxon>
        <taxon>Bacillati</taxon>
        <taxon>Actinomycetota</taxon>
        <taxon>Actinomycetes</taxon>
        <taxon>Kitasatosporales</taxon>
        <taxon>Streptomycetaceae</taxon>
        <taxon>Streptomyces</taxon>
    </lineage>
</organism>
<keyword id="KW-0002">3D-structure</keyword>
<keyword id="KW-0903">Direct protein sequencing</keyword>
<keyword id="KW-1015">Disulfide bond</keyword>
<keyword id="KW-0646">Protease inhibitor</keyword>
<keyword id="KW-0964">Secreted</keyword>
<keyword id="KW-0722">Serine protease inhibitor</keyword>
<keyword id="KW-0732">Signal</keyword>
<accession>P83544</accession>
<accession>N1NVD6</accession>
<protein>
    <recommendedName>
        <fullName>Transglutaminase-activating metalloprotease inhibitor</fullName>
        <shortName>TAMEP inhibitor</shortName>
    </recommendedName>
    <alternativeName>
        <fullName>P14</fullName>
    </alternativeName>
</protein>
<feature type="signal peptide" evidence="2">
    <location>
        <begin position="1"/>
        <end position="38"/>
    </location>
</feature>
<feature type="chain" id="PRO_0000208666" description="Transglutaminase-activating metalloprotease inhibitor">
    <location>
        <begin position="39"/>
        <end position="148"/>
    </location>
</feature>
<feature type="site" description="Reactive bond" evidence="1">
    <location>
        <begin position="108"/>
        <end position="109"/>
    </location>
</feature>
<feature type="disulfide bond" evidence="1">
    <location>
        <begin position="69"/>
        <end position="84"/>
    </location>
</feature>
<feature type="disulfide bond" evidence="1">
    <location>
        <begin position="106"/>
        <end position="136"/>
    </location>
</feature>
<feature type="sequence conflict" description="In Ref. 2; AA sequence." evidence="3" ref="2">
    <original>S</original>
    <variation>Q</variation>
    <location>
        <position position="39"/>
    </location>
</feature>
<feature type="sequence conflict" description="In Ref. 2; AA sequence." evidence="3" ref="2">
    <original>G</original>
    <variation>Q</variation>
    <location>
        <position position="53"/>
    </location>
</feature>
<feature type="strand" evidence="4">
    <location>
        <begin position="45"/>
        <end position="55"/>
    </location>
</feature>
<feature type="helix" evidence="4">
    <location>
        <begin position="56"/>
        <end position="58"/>
    </location>
</feature>
<feature type="strand" evidence="4">
    <location>
        <begin position="59"/>
        <end position="68"/>
    </location>
</feature>
<feature type="strand" evidence="4">
    <location>
        <begin position="70"/>
        <end position="72"/>
    </location>
</feature>
<feature type="strand" evidence="4">
    <location>
        <begin position="74"/>
        <end position="77"/>
    </location>
</feature>
<feature type="helix" evidence="4">
    <location>
        <begin position="80"/>
        <end position="89"/>
    </location>
</feature>
<feature type="turn" evidence="4">
    <location>
        <begin position="90"/>
        <end position="92"/>
    </location>
</feature>
<feature type="helix" evidence="4">
    <location>
        <begin position="94"/>
        <end position="98"/>
    </location>
</feature>
<feature type="strand" evidence="4">
    <location>
        <begin position="113"/>
        <end position="121"/>
    </location>
</feature>
<feature type="strand" evidence="4">
    <location>
        <begin position="124"/>
        <end position="134"/>
    </location>
</feature>
<feature type="helix" evidence="4">
    <location>
        <begin position="135"/>
        <end position="141"/>
    </location>
</feature>
<feature type="turn" evidence="4">
    <location>
        <begin position="143"/>
        <end position="146"/>
    </location>
</feature>
<proteinExistence type="evidence at protein level"/>
<gene>
    <name type="primary">sti</name>
</gene>